<sequence>MKRNIAIVAGGDTSEIVVSLRSAQGIYSFIDKEKYNLYIVEMEGRRWEVQLQDGSKTPVDRNDFSFMNGAEKVVFDFAYITIHGTPGEDGRLQGYFDMIRIPYSCCGVLAAAITYDKFVCNQYLKAFGVRISESLLLRQGQAVSDEDVVEKIGLPCFIKPNLGGSSFGVTKVKTREQIQPAIAKAFSEAEEVMIEAFMGGTELTCGCYKTKEKSVVFPLTEVVTHNEFFDYDAKYNGQVDEITPARISEELTRRVQTLTSAIYDILGCSGIIRVDYIITEGEKINLLEVNTTPGMTATSFIPQQVRAAGLDIKDVMTDIIENKF</sequence>
<reference key="1">
    <citation type="journal article" date="2005" name="Science">
        <title>Extensive DNA inversions in the B. fragilis genome control variable gene expression.</title>
        <authorList>
            <person name="Cerdeno-Tarraga A.-M."/>
            <person name="Patrick S."/>
            <person name="Crossman L.C."/>
            <person name="Blakely G."/>
            <person name="Abratt V."/>
            <person name="Lennard N."/>
            <person name="Poxton I."/>
            <person name="Duerden B."/>
            <person name="Harris B."/>
            <person name="Quail M.A."/>
            <person name="Barron A."/>
            <person name="Clark L."/>
            <person name="Corton C."/>
            <person name="Doggett J."/>
            <person name="Holden M.T.G."/>
            <person name="Larke N."/>
            <person name="Line A."/>
            <person name="Lord A."/>
            <person name="Norbertczak H."/>
            <person name="Ormond D."/>
            <person name="Price C."/>
            <person name="Rabbinowitsch E."/>
            <person name="Woodward J."/>
            <person name="Barrell B.G."/>
            <person name="Parkhill J."/>
        </authorList>
    </citation>
    <scope>NUCLEOTIDE SEQUENCE [LARGE SCALE GENOMIC DNA]</scope>
    <source>
        <strain>ATCC 25285 / DSM 2151 / CCUG 4856 / JCM 11019 / LMG 10263 / NCTC 9343 / Onslow / VPI 2553 / EN-2</strain>
    </source>
</reference>
<organism>
    <name type="scientific">Bacteroides fragilis (strain ATCC 25285 / DSM 2151 / CCUG 4856 / JCM 11019 / LMG 10263 / NCTC 9343 / Onslow / VPI 2553 / EN-2)</name>
    <dbReference type="NCBI Taxonomy" id="272559"/>
    <lineage>
        <taxon>Bacteria</taxon>
        <taxon>Pseudomonadati</taxon>
        <taxon>Bacteroidota</taxon>
        <taxon>Bacteroidia</taxon>
        <taxon>Bacteroidales</taxon>
        <taxon>Bacteroidaceae</taxon>
        <taxon>Bacteroides</taxon>
    </lineage>
</organism>
<accession>Q5LI31</accession>
<dbReference type="EC" id="6.3.2.4" evidence="2"/>
<dbReference type="EMBL" id="CR626927">
    <property type="protein sequence ID" value="CAH06197.1"/>
    <property type="molecule type" value="Genomic_DNA"/>
</dbReference>
<dbReference type="RefSeq" id="WP_010992043.1">
    <property type="nucleotide sequence ID" value="NC_003228.3"/>
</dbReference>
<dbReference type="SMR" id="Q5LI31"/>
<dbReference type="PaxDb" id="272559-BF9343_0418"/>
<dbReference type="GeneID" id="60367976"/>
<dbReference type="KEGG" id="bfs:BF9343_0418"/>
<dbReference type="eggNOG" id="COG1181">
    <property type="taxonomic scope" value="Bacteria"/>
</dbReference>
<dbReference type="HOGENOM" id="CLU_039268_1_1_10"/>
<dbReference type="UniPathway" id="UPA00219"/>
<dbReference type="Proteomes" id="UP000006731">
    <property type="component" value="Chromosome"/>
</dbReference>
<dbReference type="GO" id="GO:0005737">
    <property type="term" value="C:cytoplasm"/>
    <property type="evidence" value="ECO:0007669"/>
    <property type="project" value="UniProtKB-SubCell"/>
</dbReference>
<dbReference type="GO" id="GO:0005524">
    <property type="term" value="F:ATP binding"/>
    <property type="evidence" value="ECO:0007669"/>
    <property type="project" value="UniProtKB-KW"/>
</dbReference>
<dbReference type="GO" id="GO:0008716">
    <property type="term" value="F:D-alanine-D-alanine ligase activity"/>
    <property type="evidence" value="ECO:0007669"/>
    <property type="project" value="UniProtKB-UniRule"/>
</dbReference>
<dbReference type="GO" id="GO:0046872">
    <property type="term" value="F:metal ion binding"/>
    <property type="evidence" value="ECO:0007669"/>
    <property type="project" value="UniProtKB-KW"/>
</dbReference>
<dbReference type="GO" id="GO:0071555">
    <property type="term" value="P:cell wall organization"/>
    <property type="evidence" value="ECO:0007669"/>
    <property type="project" value="UniProtKB-KW"/>
</dbReference>
<dbReference type="GO" id="GO:0009252">
    <property type="term" value="P:peptidoglycan biosynthetic process"/>
    <property type="evidence" value="ECO:0007669"/>
    <property type="project" value="UniProtKB-UniRule"/>
</dbReference>
<dbReference type="GO" id="GO:0008360">
    <property type="term" value="P:regulation of cell shape"/>
    <property type="evidence" value="ECO:0007669"/>
    <property type="project" value="UniProtKB-KW"/>
</dbReference>
<dbReference type="Gene3D" id="3.40.50.20">
    <property type="match status" value="1"/>
</dbReference>
<dbReference type="Gene3D" id="3.30.1490.20">
    <property type="entry name" value="ATP-grasp fold, A domain"/>
    <property type="match status" value="1"/>
</dbReference>
<dbReference type="Gene3D" id="3.30.470.20">
    <property type="entry name" value="ATP-grasp fold, B domain"/>
    <property type="match status" value="1"/>
</dbReference>
<dbReference type="HAMAP" id="MF_00047">
    <property type="entry name" value="Dala_Dala_lig"/>
    <property type="match status" value="1"/>
</dbReference>
<dbReference type="InterPro" id="IPR011761">
    <property type="entry name" value="ATP-grasp"/>
</dbReference>
<dbReference type="InterPro" id="IPR013815">
    <property type="entry name" value="ATP_grasp_subdomain_1"/>
</dbReference>
<dbReference type="InterPro" id="IPR000291">
    <property type="entry name" value="D-Ala_lig_Van_CS"/>
</dbReference>
<dbReference type="InterPro" id="IPR005905">
    <property type="entry name" value="D_ala_D_ala"/>
</dbReference>
<dbReference type="InterPro" id="IPR011095">
    <property type="entry name" value="Dala_Dala_lig_C"/>
</dbReference>
<dbReference type="InterPro" id="IPR011127">
    <property type="entry name" value="Dala_Dala_lig_N"/>
</dbReference>
<dbReference type="InterPro" id="IPR016185">
    <property type="entry name" value="PreATP-grasp_dom_sf"/>
</dbReference>
<dbReference type="NCBIfam" id="TIGR01205">
    <property type="entry name" value="D_ala_D_alaTIGR"/>
    <property type="match status" value="1"/>
</dbReference>
<dbReference type="NCBIfam" id="NF002378">
    <property type="entry name" value="PRK01372.1"/>
    <property type="match status" value="1"/>
</dbReference>
<dbReference type="NCBIfam" id="NF002527">
    <property type="entry name" value="PRK01966.1-3"/>
    <property type="match status" value="1"/>
</dbReference>
<dbReference type="PANTHER" id="PTHR23132">
    <property type="entry name" value="D-ALANINE--D-ALANINE LIGASE"/>
    <property type="match status" value="1"/>
</dbReference>
<dbReference type="PANTHER" id="PTHR23132:SF23">
    <property type="entry name" value="D-ALANINE--D-ALANINE LIGASE B"/>
    <property type="match status" value="1"/>
</dbReference>
<dbReference type="Pfam" id="PF07478">
    <property type="entry name" value="Dala_Dala_lig_C"/>
    <property type="match status" value="1"/>
</dbReference>
<dbReference type="Pfam" id="PF01820">
    <property type="entry name" value="Dala_Dala_lig_N"/>
    <property type="match status" value="1"/>
</dbReference>
<dbReference type="PIRSF" id="PIRSF039102">
    <property type="entry name" value="Ddl/VanB"/>
    <property type="match status" value="1"/>
</dbReference>
<dbReference type="SUPFAM" id="SSF56059">
    <property type="entry name" value="Glutathione synthetase ATP-binding domain-like"/>
    <property type="match status" value="1"/>
</dbReference>
<dbReference type="SUPFAM" id="SSF52440">
    <property type="entry name" value="PreATP-grasp domain"/>
    <property type="match status" value="1"/>
</dbReference>
<dbReference type="PROSITE" id="PS50975">
    <property type="entry name" value="ATP_GRASP"/>
    <property type="match status" value="1"/>
</dbReference>
<dbReference type="PROSITE" id="PS00843">
    <property type="entry name" value="DALA_DALA_LIGASE_1"/>
    <property type="match status" value="1"/>
</dbReference>
<dbReference type="PROSITE" id="PS00844">
    <property type="entry name" value="DALA_DALA_LIGASE_2"/>
    <property type="match status" value="1"/>
</dbReference>
<gene>
    <name evidence="2" type="primary">ddl</name>
    <name type="ordered locus">BF0435</name>
</gene>
<protein>
    <recommendedName>
        <fullName evidence="2">D-alanine--D-alanine ligase</fullName>
        <ecNumber evidence="2">6.3.2.4</ecNumber>
    </recommendedName>
    <alternativeName>
        <fullName evidence="2">D-Ala-D-Ala ligase</fullName>
    </alternativeName>
    <alternativeName>
        <fullName evidence="2">D-alanylalanine synthetase</fullName>
    </alternativeName>
</protein>
<keyword id="KW-0067">ATP-binding</keyword>
<keyword id="KW-0133">Cell shape</keyword>
<keyword id="KW-0961">Cell wall biogenesis/degradation</keyword>
<keyword id="KW-0963">Cytoplasm</keyword>
<keyword id="KW-0436">Ligase</keyword>
<keyword id="KW-0460">Magnesium</keyword>
<keyword id="KW-0464">Manganese</keyword>
<keyword id="KW-0479">Metal-binding</keyword>
<keyword id="KW-0547">Nucleotide-binding</keyword>
<keyword id="KW-0573">Peptidoglycan synthesis</keyword>
<comment type="function">
    <text evidence="2">Cell wall formation.</text>
</comment>
<comment type="catalytic activity">
    <reaction evidence="2">
        <text>2 D-alanine + ATP = D-alanyl-D-alanine + ADP + phosphate + H(+)</text>
        <dbReference type="Rhea" id="RHEA:11224"/>
        <dbReference type="ChEBI" id="CHEBI:15378"/>
        <dbReference type="ChEBI" id="CHEBI:30616"/>
        <dbReference type="ChEBI" id="CHEBI:43474"/>
        <dbReference type="ChEBI" id="CHEBI:57416"/>
        <dbReference type="ChEBI" id="CHEBI:57822"/>
        <dbReference type="ChEBI" id="CHEBI:456216"/>
        <dbReference type="EC" id="6.3.2.4"/>
    </reaction>
</comment>
<comment type="cofactor">
    <cofactor evidence="1">
        <name>Mg(2+)</name>
        <dbReference type="ChEBI" id="CHEBI:18420"/>
    </cofactor>
    <cofactor evidence="1">
        <name>Mn(2+)</name>
        <dbReference type="ChEBI" id="CHEBI:29035"/>
    </cofactor>
    <text evidence="1">Binds 2 magnesium or manganese ions per subunit.</text>
</comment>
<comment type="pathway">
    <text evidence="2">Cell wall biogenesis; peptidoglycan biosynthesis.</text>
</comment>
<comment type="subcellular location">
    <subcellularLocation>
        <location evidence="2">Cytoplasm</location>
    </subcellularLocation>
</comment>
<comment type="similarity">
    <text evidence="2">Belongs to the D-alanine--D-alanine ligase family.</text>
</comment>
<proteinExistence type="inferred from homology"/>
<feature type="chain" id="PRO_1000030424" description="D-alanine--D-alanine ligase">
    <location>
        <begin position="1"/>
        <end position="324"/>
    </location>
</feature>
<feature type="domain" description="ATP-grasp" evidence="2">
    <location>
        <begin position="121"/>
        <end position="321"/>
    </location>
</feature>
<feature type="binding site" evidence="2">
    <location>
        <begin position="149"/>
        <end position="204"/>
    </location>
    <ligand>
        <name>ATP</name>
        <dbReference type="ChEBI" id="CHEBI:30616"/>
    </ligand>
</feature>
<feature type="binding site" evidence="2">
    <location>
        <position position="275"/>
    </location>
    <ligand>
        <name>Mg(2+)</name>
        <dbReference type="ChEBI" id="CHEBI:18420"/>
        <label>1</label>
    </ligand>
</feature>
<feature type="binding site" evidence="2">
    <location>
        <position position="288"/>
    </location>
    <ligand>
        <name>Mg(2+)</name>
        <dbReference type="ChEBI" id="CHEBI:18420"/>
        <label>1</label>
    </ligand>
</feature>
<feature type="binding site" evidence="2">
    <location>
        <position position="288"/>
    </location>
    <ligand>
        <name>Mg(2+)</name>
        <dbReference type="ChEBI" id="CHEBI:18420"/>
        <label>2</label>
    </ligand>
</feature>
<feature type="binding site" evidence="2">
    <location>
        <position position="290"/>
    </location>
    <ligand>
        <name>Mg(2+)</name>
        <dbReference type="ChEBI" id="CHEBI:18420"/>
        <label>2</label>
    </ligand>
</feature>
<name>DDL_BACFN</name>
<evidence type="ECO:0000250" key="1"/>
<evidence type="ECO:0000255" key="2">
    <source>
        <dbReference type="HAMAP-Rule" id="MF_00047"/>
    </source>
</evidence>